<gene>
    <name evidence="3" type="primary">QPT1</name>
</gene>
<proteinExistence type="evidence at protein level"/>
<sequence>MFKVFPFTAIGHPHAITAPRLVVKMSAIATKNAVESLVVKPPAHPTYDLKGVIQLALSEDAGDLGDVTCKATIPVVMESEAHFLAKEDGIVAGIALAEMIFAEVDPSLKMEWSISDGDKVHKGLKFGKVQGKAHSIVIAERVVLNFMQRMSGIATLTKAMADAAHPATILETRKTAPGLRLVDKWAVLIGGGKNHRMGLFDMVMIKDNHISAAGGVSKALNSVDQYLEQNKLQMGVEVETRTIAEVLEVLDYASRTKTSLTRIMLDNMVVPLSDGDIEVSMLNEAVDLINGRFETEASGNVTLETVHKIGQTGVTYISSGALTHSVKALDISLKIDTELALEVGRRTKRA</sequence>
<feature type="chain" id="PRO_0000455795" description="Quinolinate phosphoribosyltransferase [decarboxylating] 1">
    <location>
        <begin position="1"/>
        <end position="350"/>
    </location>
</feature>
<feature type="binding site" evidence="1">
    <location>
        <position position="141"/>
    </location>
    <ligand>
        <name>substrate</name>
    </ligand>
</feature>
<feature type="binding site" evidence="1">
    <location>
        <begin position="172"/>
        <end position="174"/>
    </location>
    <ligand>
        <name>substrate</name>
    </ligand>
</feature>
<feature type="binding site" evidence="1">
    <location>
        <position position="196"/>
    </location>
    <ligand>
        <name>substrate</name>
    </ligand>
</feature>
<feature type="binding site" evidence="1">
    <location>
        <position position="206"/>
    </location>
    <ligand>
        <name>substrate</name>
    </ligand>
</feature>
<feature type="binding site" evidence="1">
    <location>
        <position position="239"/>
    </location>
    <ligand>
        <name>substrate</name>
    </ligand>
</feature>
<feature type="binding site" evidence="1">
    <location>
        <position position="266"/>
    </location>
    <ligand>
        <name>substrate</name>
    </ligand>
</feature>
<feature type="binding site" evidence="1">
    <location>
        <begin position="298"/>
        <end position="300"/>
    </location>
    <ligand>
        <name>substrate</name>
    </ligand>
</feature>
<feature type="binding site" evidence="1">
    <location>
        <begin position="319"/>
        <end position="321"/>
    </location>
    <ligand>
        <name>substrate</name>
    </ligand>
</feature>
<name>QPT1_NICGL</name>
<keyword id="KW-0017">Alkaloid metabolism</keyword>
<keyword id="KW-0328">Glycosyltransferase</keyword>
<keyword id="KW-0662">Pyridine nucleotide biosynthesis</keyword>
<keyword id="KW-0808">Transferase</keyword>
<evidence type="ECO:0000250" key="1">
    <source>
        <dbReference type="UniProtKB" id="P9WJJ7"/>
    </source>
</evidence>
<evidence type="ECO:0000269" key="2">
    <source>
    </source>
</evidence>
<evidence type="ECO:0000303" key="3">
    <source>
    </source>
</evidence>
<evidence type="ECO:0000305" key="4"/>
<evidence type="ECO:0000305" key="5">
    <source>
    </source>
</evidence>
<dbReference type="EC" id="2.4.2.19" evidence="5"/>
<dbReference type="EMBL" id="AM922108">
    <property type="protein sequence ID" value="CAP57999.1"/>
    <property type="molecule type" value="Genomic_DNA"/>
</dbReference>
<dbReference type="SMR" id="B2RFT0"/>
<dbReference type="UniPathway" id="UPA00107"/>
<dbReference type="UniPathway" id="UPA00253">
    <property type="reaction ID" value="UER00331"/>
</dbReference>
<dbReference type="GO" id="GO:0005737">
    <property type="term" value="C:cytoplasm"/>
    <property type="evidence" value="ECO:0007669"/>
    <property type="project" value="TreeGrafter"/>
</dbReference>
<dbReference type="GO" id="GO:0004514">
    <property type="term" value="F:nicotinate-nucleotide diphosphorylase (carboxylating) activity"/>
    <property type="evidence" value="ECO:0007669"/>
    <property type="project" value="UniProtKB-EC"/>
</dbReference>
<dbReference type="GO" id="GO:0009820">
    <property type="term" value="P:alkaloid metabolic process"/>
    <property type="evidence" value="ECO:0007669"/>
    <property type="project" value="UniProtKB-KW"/>
</dbReference>
<dbReference type="GO" id="GO:0009435">
    <property type="term" value="P:NAD biosynthetic process"/>
    <property type="evidence" value="ECO:0007669"/>
    <property type="project" value="UniProtKB-UniPathway"/>
</dbReference>
<dbReference type="GO" id="GO:0042179">
    <property type="term" value="P:nicotine biosynthetic process"/>
    <property type="evidence" value="ECO:0007669"/>
    <property type="project" value="UniProtKB-UniPathway"/>
</dbReference>
<dbReference type="GO" id="GO:0034213">
    <property type="term" value="P:quinolinate catabolic process"/>
    <property type="evidence" value="ECO:0007669"/>
    <property type="project" value="TreeGrafter"/>
</dbReference>
<dbReference type="CDD" id="cd01572">
    <property type="entry name" value="QPRTase"/>
    <property type="match status" value="1"/>
</dbReference>
<dbReference type="FunFam" id="3.90.1170.20:FF:000001">
    <property type="entry name" value="Nicotinate-nucleotide diphosphorylase (Carboxylating)"/>
    <property type="match status" value="1"/>
</dbReference>
<dbReference type="FunFam" id="3.20.20.70:FF:000149">
    <property type="entry name" value="Nicotinate-nucleotide pyrophosphorylase [carboxylating]"/>
    <property type="match status" value="1"/>
</dbReference>
<dbReference type="Gene3D" id="3.20.20.70">
    <property type="entry name" value="Aldolase class I"/>
    <property type="match status" value="1"/>
</dbReference>
<dbReference type="Gene3D" id="3.90.1170.20">
    <property type="entry name" value="Quinolinate phosphoribosyl transferase, N-terminal domain"/>
    <property type="match status" value="1"/>
</dbReference>
<dbReference type="InterPro" id="IPR013785">
    <property type="entry name" value="Aldolase_TIM"/>
</dbReference>
<dbReference type="InterPro" id="IPR004393">
    <property type="entry name" value="NadC"/>
</dbReference>
<dbReference type="InterPro" id="IPR027277">
    <property type="entry name" value="NadC/ModD"/>
</dbReference>
<dbReference type="InterPro" id="IPR036068">
    <property type="entry name" value="Nicotinate_pribotase-like_C"/>
</dbReference>
<dbReference type="InterPro" id="IPR037128">
    <property type="entry name" value="Quinolinate_PRibosylTase_N_sf"/>
</dbReference>
<dbReference type="InterPro" id="IPR002638">
    <property type="entry name" value="Quinolinate_PRibosylTrfase_C"/>
</dbReference>
<dbReference type="InterPro" id="IPR022412">
    <property type="entry name" value="Quinolinate_PRibosylTrfase_N"/>
</dbReference>
<dbReference type="NCBIfam" id="TIGR00078">
    <property type="entry name" value="nadC"/>
    <property type="match status" value="1"/>
</dbReference>
<dbReference type="PANTHER" id="PTHR32179">
    <property type="entry name" value="NICOTINATE-NUCLEOTIDE PYROPHOSPHORYLASE [CARBOXYLATING]"/>
    <property type="match status" value="1"/>
</dbReference>
<dbReference type="PANTHER" id="PTHR32179:SF3">
    <property type="entry name" value="NICOTINATE-NUCLEOTIDE PYROPHOSPHORYLASE [CARBOXYLATING]"/>
    <property type="match status" value="1"/>
</dbReference>
<dbReference type="Pfam" id="PF01729">
    <property type="entry name" value="QRPTase_C"/>
    <property type="match status" value="1"/>
</dbReference>
<dbReference type="Pfam" id="PF02749">
    <property type="entry name" value="QRPTase_N"/>
    <property type="match status" value="1"/>
</dbReference>
<dbReference type="SUPFAM" id="SSF51690">
    <property type="entry name" value="Nicotinate/Quinolinate PRTase C-terminal domain-like"/>
    <property type="match status" value="1"/>
</dbReference>
<dbReference type="SUPFAM" id="SSF54675">
    <property type="entry name" value="Nicotinate/Quinolinate PRTase N-terminal domain-like"/>
    <property type="match status" value="1"/>
</dbReference>
<protein>
    <recommendedName>
        <fullName evidence="3">Quinolinate phosphoribosyltransferase [decarboxylating] 1</fullName>
        <shortName evidence="3">NgQPT1</shortName>
        <ecNumber evidence="5">2.4.2.19</ecNumber>
    </recommendedName>
</protein>
<comment type="function">
    <text evidence="2 5">Involved in the biosynthesis of pyridine alkaloid natural products, leading mainly to the production of anabasine, anatabine, nicotine and nornicotine, effective deterrents against herbivores with antiparasitic and pesticide properties (neurotoxins); nornicotine serves as the precursor in the synthesis of the carcinogen compound N'-nitrosonornicotine (NNN) (Probable) (PubMed:31276744). Involved in the catabolism of quinolinic acid (QA) (Probable).</text>
</comment>
<comment type="catalytic activity">
    <reaction evidence="5">
        <text>nicotinate beta-D-ribonucleotide + CO2 + diphosphate = quinolinate + 5-phospho-alpha-D-ribose 1-diphosphate + 2 H(+)</text>
        <dbReference type="Rhea" id="RHEA:12733"/>
        <dbReference type="ChEBI" id="CHEBI:15378"/>
        <dbReference type="ChEBI" id="CHEBI:16526"/>
        <dbReference type="ChEBI" id="CHEBI:29959"/>
        <dbReference type="ChEBI" id="CHEBI:33019"/>
        <dbReference type="ChEBI" id="CHEBI:57502"/>
        <dbReference type="ChEBI" id="CHEBI:58017"/>
        <dbReference type="EC" id="2.4.2.19"/>
    </reaction>
    <physiologicalReaction direction="right-to-left" evidence="5">
        <dbReference type="Rhea" id="RHEA:12735"/>
    </physiologicalReaction>
</comment>
<comment type="pathway">
    <text evidence="5">Alkaloid biosynthesis; nicotine biosynthesis.</text>
</comment>
<comment type="pathway">
    <text evidence="5">Cofactor biosynthesis; NAD(+) biosynthesis; nicotinate D-ribonucleotide from quinolinate: step 1/1.</text>
</comment>
<comment type="similarity">
    <text evidence="4">Belongs to the NadC/ModD family.</text>
</comment>
<reference key="1">
    <citation type="journal article" date="2012" name="Plant Sci.">
        <title>Structure and expression of the quinolinate phosphoribosyltransferase (QPT) gene family in Nicotiana.</title>
        <authorList>
            <person name="Ryan S.M."/>
            <person name="Cane K.A."/>
            <person name="DeBoer K.D."/>
            <person name="Sinclair S.J."/>
            <person name="Brimblecombe R."/>
            <person name="Hamill J.D."/>
        </authorList>
    </citation>
    <scope>NUCLEOTIDE SEQUENCE [GENOMIC DNA]</scope>
    <scope>FUNCTION</scope>
    <scope>CATALYTIC ACTIVITY</scope>
    <scope>PATHWAY</scope>
    <source>
        <tissue>Leaf</tissue>
    </source>
</reference>
<reference key="2">
    <citation type="journal article" date="2019" name="Food Chem. Toxicol.">
        <title>Antiparasitic properties of leaf extracts derived from selected Nicotiana species and Nicotiana tabacum varieties.</title>
        <authorList>
            <person name="Schorderet Weber S."/>
            <person name="Kaminski K.P."/>
            <person name="Perret J.-L."/>
            <person name="Leroy P."/>
            <person name="Mazurov A."/>
            <person name="Peitsch M.C."/>
            <person name="Ivanov N.V."/>
            <person name="Hoeng J."/>
        </authorList>
    </citation>
    <scope>FUNCTION</scope>
    <source>
        <strain>cv. Burley Stella</strain>
        <strain>cv. Burley TN90</strain>
        <strain>cv. Virginia ITB 683</strain>
        <strain>cv. Virginia K326</strain>
    </source>
</reference>
<accession>B2RFT0</accession>
<organism>
    <name type="scientific">Nicotiana glauca</name>
    <name type="common">Glaucous tobacco</name>
    <name type="synonym">Tree tobacco</name>
    <dbReference type="NCBI Taxonomy" id="4090"/>
    <lineage>
        <taxon>Eukaryota</taxon>
        <taxon>Viridiplantae</taxon>
        <taxon>Streptophyta</taxon>
        <taxon>Embryophyta</taxon>
        <taxon>Tracheophyta</taxon>
        <taxon>Spermatophyta</taxon>
        <taxon>Magnoliopsida</taxon>
        <taxon>eudicotyledons</taxon>
        <taxon>Gunneridae</taxon>
        <taxon>Pentapetalae</taxon>
        <taxon>asterids</taxon>
        <taxon>lamiids</taxon>
        <taxon>Solanales</taxon>
        <taxon>Solanaceae</taxon>
        <taxon>Nicotianoideae</taxon>
        <taxon>Nicotianeae</taxon>
        <taxon>Nicotiana</taxon>
    </lineage>
</organism>